<accession>P64534</accession>
<accession>P76426</accession>
<accession>Q2MAW9</accession>
<dbReference type="EMBL" id="U00096">
    <property type="protein sequence ID" value="AAC75168.2"/>
    <property type="molecule type" value="Genomic_DNA"/>
</dbReference>
<dbReference type="EMBL" id="AP009048">
    <property type="protein sequence ID" value="BAE76587.1"/>
    <property type="molecule type" value="Genomic_DNA"/>
</dbReference>
<dbReference type="RefSeq" id="NP_416610.4">
    <property type="nucleotide sequence ID" value="NC_000913.3"/>
</dbReference>
<dbReference type="RefSeq" id="WP_000153067.1">
    <property type="nucleotide sequence ID" value="NZ_SSUV01000035.1"/>
</dbReference>
<dbReference type="SMR" id="P64534"/>
<dbReference type="BioGRID" id="4260433">
    <property type="interactions" value="3"/>
</dbReference>
<dbReference type="BioGRID" id="853321">
    <property type="interactions" value="4"/>
</dbReference>
<dbReference type="DIP" id="DIP-48070N"/>
<dbReference type="FunCoup" id="P64534">
    <property type="interactions" value="97"/>
</dbReference>
<dbReference type="IntAct" id="P64534">
    <property type="interactions" value="6"/>
</dbReference>
<dbReference type="STRING" id="511145.b2107"/>
<dbReference type="TCDB" id="2.A.113.1.1">
    <property type="family name" value="the nickel/cobalt transporter (nico) family"/>
</dbReference>
<dbReference type="jPOST" id="P64534"/>
<dbReference type="PaxDb" id="511145-b2107"/>
<dbReference type="EnsemblBacteria" id="AAC75168">
    <property type="protein sequence ID" value="AAC75168"/>
    <property type="gene ID" value="b2107"/>
</dbReference>
<dbReference type="GeneID" id="75203264"/>
<dbReference type="GeneID" id="949080"/>
<dbReference type="KEGG" id="ecj:JW5346"/>
<dbReference type="KEGG" id="eco:b2107"/>
<dbReference type="KEGG" id="ecoc:C3026_11820"/>
<dbReference type="PATRIC" id="fig|1411691.4.peg.140"/>
<dbReference type="EchoBASE" id="EB3825"/>
<dbReference type="eggNOG" id="COG5455">
    <property type="taxonomic scope" value="Bacteria"/>
</dbReference>
<dbReference type="HOGENOM" id="CLU_174019_0_0_6"/>
<dbReference type="InParanoid" id="P64534"/>
<dbReference type="OMA" id="PEYTIKQ"/>
<dbReference type="OrthoDB" id="6538939at2"/>
<dbReference type="PhylomeDB" id="P64534"/>
<dbReference type="BioCyc" id="EcoCyc:G7139-MONOMER"/>
<dbReference type="PRO" id="PR:P64534"/>
<dbReference type="Proteomes" id="UP000000625">
    <property type="component" value="Chromosome"/>
</dbReference>
<dbReference type="GO" id="GO:0005829">
    <property type="term" value="C:cytosol"/>
    <property type="evidence" value="ECO:0000314"/>
    <property type="project" value="EcoCyc"/>
</dbReference>
<dbReference type="GO" id="GO:0030288">
    <property type="term" value="C:outer membrane-bounded periplasmic space"/>
    <property type="evidence" value="ECO:0000314"/>
    <property type="project" value="EcoCyc"/>
</dbReference>
<dbReference type="GO" id="GO:0005507">
    <property type="term" value="F:copper ion binding"/>
    <property type="evidence" value="ECO:0000314"/>
    <property type="project" value="EcoCyc"/>
</dbReference>
<dbReference type="GO" id="GO:0006974">
    <property type="term" value="P:DNA damage response"/>
    <property type="evidence" value="ECO:0000270"/>
    <property type="project" value="EcoliWiki"/>
</dbReference>
<dbReference type="GO" id="GO:0032025">
    <property type="term" value="P:response to cobalt ion"/>
    <property type="evidence" value="ECO:0000315"/>
    <property type="project" value="EcoCyc"/>
</dbReference>
<dbReference type="GO" id="GO:0010045">
    <property type="term" value="P:response to nickel cation"/>
    <property type="evidence" value="ECO:0000315"/>
    <property type="project" value="EcoCyc"/>
</dbReference>
<dbReference type="GO" id="GO:1901652">
    <property type="term" value="P:response to peptide"/>
    <property type="evidence" value="ECO:0000315"/>
    <property type="project" value="EcoCyc"/>
</dbReference>
<dbReference type="FunFam" id="3.10.450.160:FF:000001">
    <property type="entry name" value="Heavy metal resistance protein"/>
    <property type="match status" value="1"/>
</dbReference>
<dbReference type="Gene3D" id="3.10.450.160">
    <property type="entry name" value="inner membrane protein cigr"/>
    <property type="match status" value="1"/>
</dbReference>
<dbReference type="InterPro" id="IPR024572">
    <property type="entry name" value="RcnB"/>
</dbReference>
<dbReference type="Pfam" id="PF11776">
    <property type="entry name" value="RcnB"/>
    <property type="match status" value="1"/>
</dbReference>
<proteinExistence type="evidence at protein level"/>
<organism>
    <name type="scientific">Escherichia coli (strain K12)</name>
    <dbReference type="NCBI Taxonomy" id="83333"/>
    <lineage>
        <taxon>Bacteria</taxon>
        <taxon>Pseudomonadati</taxon>
        <taxon>Pseudomonadota</taxon>
        <taxon>Gammaproteobacteria</taxon>
        <taxon>Enterobacterales</taxon>
        <taxon>Enterobacteriaceae</taxon>
        <taxon>Escherichia</taxon>
    </lineage>
</organism>
<name>RCNB_ECOLI</name>
<keyword id="KW-0903">Direct protein sequencing</keyword>
<keyword id="KW-0574">Periplasm</keyword>
<keyword id="KW-1185">Reference proteome</keyword>
<keyword id="KW-0732">Signal</keyword>
<evidence type="ECO:0000269" key="1">
    <source>
    </source>
</evidence>
<evidence type="ECO:0000305" key="2"/>
<reference key="1">
    <citation type="journal article" date="1997" name="Science">
        <title>The complete genome sequence of Escherichia coli K-12.</title>
        <authorList>
            <person name="Blattner F.R."/>
            <person name="Plunkett G. III"/>
            <person name="Bloch C.A."/>
            <person name="Perna N.T."/>
            <person name="Burland V."/>
            <person name="Riley M."/>
            <person name="Collado-Vides J."/>
            <person name="Glasner J.D."/>
            <person name="Rode C.K."/>
            <person name="Mayhew G.F."/>
            <person name="Gregor J."/>
            <person name="Davis N.W."/>
            <person name="Kirkpatrick H.A."/>
            <person name="Goeden M.A."/>
            <person name="Rose D.J."/>
            <person name="Mau B."/>
            <person name="Shao Y."/>
        </authorList>
    </citation>
    <scope>NUCLEOTIDE SEQUENCE [LARGE SCALE GENOMIC DNA]</scope>
    <source>
        <strain>K12 / MG1655 / ATCC 47076</strain>
    </source>
</reference>
<reference key="2">
    <citation type="journal article" date="2006" name="Mol. Syst. Biol.">
        <title>Highly accurate genome sequences of Escherichia coli K-12 strains MG1655 and W3110.</title>
        <authorList>
            <person name="Hayashi K."/>
            <person name="Morooka N."/>
            <person name="Yamamoto Y."/>
            <person name="Fujita K."/>
            <person name="Isono K."/>
            <person name="Choi S."/>
            <person name="Ohtsubo E."/>
            <person name="Baba T."/>
            <person name="Wanner B.L."/>
            <person name="Mori H."/>
            <person name="Horiuchi T."/>
        </authorList>
    </citation>
    <scope>NUCLEOTIDE SEQUENCE [LARGE SCALE GENOMIC DNA]</scope>
    <source>
        <strain>K12 / W3110 / ATCC 27325 / DSM 5911</strain>
    </source>
</reference>
<reference key="3">
    <citation type="journal article" date="2011" name="J. Bacteriol.">
        <title>RcnB is a periplasmic protein essential for maintaining intracellular Ni and Co concentrations in Escherichia coli.</title>
        <authorList>
            <person name="Bleriot C."/>
            <person name="Effantin G."/>
            <person name="Lagarde F."/>
            <person name="Mandrand-Berthelot M.A."/>
            <person name="Rodrigue A."/>
        </authorList>
    </citation>
    <scope>PROTEIN SEQUENCE OF 26-31</scope>
    <scope>FUNCTION</scope>
    <scope>SUBCELLULAR LOCATION</scope>
    <scope>INDUCTION</scope>
    <scope>DISRUPTION PHENOTYPE</scope>
    <source>
        <strain>K12</strain>
    </source>
</reference>
<comment type="function">
    <text evidence="1">Influences nickel and cobalt homeostasis. May act by modulating RcnA-mediated export of these ions to avoid excess efflux. Not involved in nickel import and does not bind nickel or cobalt ions directly.</text>
</comment>
<comment type="subcellular location">
    <subcellularLocation>
        <location evidence="1">Periplasm</location>
    </subcellularLocation>
</comment>
<comment type="induction">
    <text evidence="1">Repressed by RcnR. Induced by nickel and cobalt.</text>
</comment>
<comment type="disruption phenotype">
    <text evidence="1">Mutants show reduced intracellular nickel or cobalt levels.</text>
</comment>
<comment type="similarity">
    <text evidence="2">Belongs to the RcnB family.</text>
</comment>
<feature type="signal peptide" evidence="1">
    <location>
        <begin position="1"/>
        <end position="25"/>
    </location>
</feature>
<feature type="chain" id="PRO_0000013872" description="Nickel/cobalt homeostasis protein RcnB">
    <location>
        <begin position="26"/>
        <end position="112"/>
    </location>
</feature>
<gene>
    <name type="primary">rcnB</name>
    <name type="synonym">yohN</name>
    <name type="ordered locus">b2107</name>
    <name type="ordered locus">JW5346</name>
</gene>
<protein>
    <recommendedName>
        <fullName>Nickel/cobalt homeostasis protein RcnB</fullName>
    </recommendedName>
</protein>
<sequence>MTIKNKMLLGALLLVTSAAWAAPATAGSTNTSGISKYELSSFIADFKHFKPGDTVPEMYRTDEYNIKQWQLRNLPAPDAGTHWTYMGGAYVLISDTDGKIIKAYDGEIFYHR</sequence>